<accession>A6QQA5</accession>
<feature type="chain" id="PRO_0000371344" description="UPF0739 protein C1orf74 homolog">
    <location>
        <begin position="1"/>
        <end position="263"/>
    </location>
</feature>
<reference key="1">
    <citation type="submission" date="2007-07" db="EMBL/GenBank/DDBJ databases">
        <authorList>
            <consortium name="NIH - Mammalian Gene Collection (MGC) project"/>
        </authorList>
    </citation>
    <scope>NUCLEOTIDE SEQUENCE [LARGE SCALE MRNA]</scope>
    <source>
        <strain>Hereford</strain>
        <tissue>Thymus</tissue>
    </source>
</reference>
<organism>
    <name type="scientific">Bos taurus</name>
    <name type="common">Bovine</name>
    <dbReference type="NCBI Taxonomy" id="9913"/>
    <lineage>
        <taxon>Eukaryota</taxon>
        <taxon>Metazoa</taxon>
        <taxon>Chordata</taxon>
        <taxon>Craniata</taxon>
        <taxon>Vertebrata</taxon>
        <taxon>Euteleostomi</taxon>
        <taxon>Mammalia</taxon>
        <taxon>Eutheria</taxon>
        <taxon>Laurasiatheria</taxon>
        <taxon>Artiodactyla</taxon>
        <taxon>Ruminantia</taxon>
        <taxon>Pecora</taxon>
        <taxon>Bovidae</taxon>
        <taxon>Bovinae</taxon>
        <taxon>Bos</taxon>
    </lineage>
</organism>
<evidence type="ECO:0000305" key="1"/>
<keyword id="KW-1185">Reference proteome</keyword>
<comment type="similarity">
    <text evidence="1">Belongs to the UPF0739 family.</text>
</comment>
<name>CA074_BOVIN</name>
<proteinExistence type="evidence at transcript level"/>
<protein>
    <recommendedName>
        <fullName>UPF0739 protein C1orf74 homolog</fullName>
    </recommendedName>
</protein>
<dbReference type="EMBL" id="BC149736">
    <property type="protein sequence ID" value="AAI49737.1"/>
    <property type="molecule type" value="mRNA"/>
</dbReference>
<dbReference type="RefSeq" id="NP_001093811.1">
    <property type="nucleotide sequence ID" value="NM_001100341.2"/>
</dbReference>
<dbReference type="RefSeq" id="XP_005217400.1">
    <property type="nucleotide sequence ID" value="XM_005217343.5"/>
</dbReference>
<dbReference type="FunCoup" id="A6QQA5">
    <property type="interactions" value="1562"/>
</dbReference>
<dbReference type="STRING" id="9913.ENSBTAP00000041332"/>
<dbReference type="PaxDb" id="9913-ENSBTAP00000041332"/>
<dbReference type="Ensembl" id="ENSBTAT00000003693.6">
    <property type="protein sequence ID" value="ENSBTAP00000041332.2"/>
    <property type="gene ID" value="ENSBTAG00000002848.6"/>
</dbReference>
<dbReference type="Ensembl" id="ENSBTAT00000096796.1">
    <property type="protein sequence ID" value="ENSBTAP00000077272.1"/>
    <property type="gene ID" value="ENSBTAG00000002848.6"/>
</dbReference>
<dbReference type="Ensembl" id="ENSBTAT00000110362.1">
    <property type="protein sequence ID" value="ENSBTAP00000090097.1"/>
    <property type="gene ID" value="ENSBTAG00000002848.6"/>
</dbReference>
<dbReference type="Ensembl" id="ENSBTAT00000111490.1">
    <property type="protein sequence ID" value="ENSBTAP00000085295.1"/>
    <property type="gene ID" value="ENSBTAG00000002848.6"/>
</dbReference>
<dbReference type="Ensembl" id="ENSBTAT00000123174.1">
    <property type="protein sequence ID" value="ENSBTAP00000077649.1"/>
    <property type="gene ID" value="ENSBTAG00000002848.6"/>
</dbReference>
<dbReference type="Ensembl" id="ENSBTAT00000130664.1">
    <property type="protein sequence ID" value="ENSBTAP00000097554.1"/>
    <property type="gene ID" value="ENSBTAG00000002848.6"/>
</dbReference>
<dbReference type="GeneID" id="511599"/>
<dbReference type="KEGG" id="bta:511599"/>
<dbReference type="CTD" id="511599"/>
<dbReference type="VEuPathDB" id="HostDB:ENSBTAG00000002848"/>
<dbReference type="VGNC" id="VGNC:52644">
    <property type="gene designation" value="C16H1orf74"/>
</dbReference>
<dbReference type="eggNOG" id="ENOG502RZ46">
    <property type="taxonomic scope" value="Eukaryota"/>
</dbReference>
<dbReference type="GeneTree" id="ENSGT00390000002240"/>
<dbReference type="HOGENOM" id="CLU_1156081_0_0_1"/>
<dbReference type="InParanoid" id="A6QQA5"/>
<dbReference type="OMA" id="YPVTYWF"/>
<dbReference type="OrthoDB" id="10056365at2759"/>
<dbReference type="TreeFam" id="TF328609"/>
<dbReference type="Proteomes" id="UP000009136">
    <property type="component" value="Chromosome 16"/>
</dbReference>
<dbReference type="Bgee" id="ENSBTAG00000002848">
    <property type="expression patterns" value="Expressed in semen and 106 other cell types or tissues"/>
</dbReference>
<dbReference type="InterPro" id="IPR027850">
    <property type="entry name" value="DUF4504"/>
</dbReference>
<dbReference type="PANTHER" id="PTHR31366">
    <property type="entry name" value="UPF0739 PROTEIN C1ORF74"/>
    <property type="match status" value="1"/>
</dbReference>
<dbReference type="PANTHER" id="PTHR31366:SF2">
    <property type="entry name" value="UPF0739 PROTEIN C1ORF74"/>
    <property type="match status" value="1"/>
</dbReference>
<dbReference type="Pfam" id="PF14953">
    <property type="entry name" value="DUF4504"/>
    <property type="match status" value="1"/>
</dbReference>
<sequence>MSTPSPQLLVAAAQQTLGMGKRRGPPRAVCLHLAGEVLAVARGLKPALLYDCSSAGAPEIQSYLEKLRGLGFPTQGLHVLEIAENSLIVHPEYVRRHLEQVLLGSIAFVDVSGSQPYPAVCSLDQLQDFKALVVEIITHLQGLQRDRSLAVSCSRLCSSAWNLCTVFGILLGYPVPYTFHENQGEDNCLAQTPLRVFTARISWLCCQPPVLLYSFSVPESLFLSLRDILNTWEKDLRTRCRTQNDFADLSISSEIVTLPAVAL</sequence>